<protein>
    <recommendedName>
        <fullName evidence="1">Ribosomal RNA small subunit methyltransferase A</fullName>
        <ecNumber evidence="1">2.1.1.182</ecNumber>
    </recommendedName>
    <alternativeName>
        <fullName evidence="1">16S rRNA (adenine(1518)-N(6)/adenine(1519)-N(6))-dimethyltransferase</fullName>
    </alternativeName>
    <alternativeName>
        <fullName evidence="1">16S rRNA dimethyladenosine transferase</fullName>
    </alternativeName>
    <alternativeName>
        <fullName evidence="1">16S rRNA dimethylase</fullName>
    </alternativeName>
    <alternativeName>
        <fullName evidence="1">S-adenosylmethionine-6-N', N'-adenosyl(rRNA) dimethyltransferase</fullName>
    </alternativeName>
</protein>
<feature type="chain" id="PRO_0000257285" description="Ribosomal RNA small subunit methyltransferase A">
    <location>
        <begin position="1"/>
        <end position="278"/>
    </location>
</feature>
<feature type="binding site" evidence="1">
    <location>
        <position position="25"/>
    </location>
    <ligand>
        <name>S-adenosyl-L-methionine</name>
        <dbReference type="ChEBI" id="CHEBI:59789"/>
    </ligand>
</feature>
<feature type="binding site" evidence="1">
    <location>
        <position position="27"/>
    </location>
    <ligand>
        <name>S-adenosyl-L-methionine</name>
        <dbReference type="ChEBI" id="CHEBI:59789"/>
    </ligand>
</feature>
<feature type="binding site" evidence="1">
    <location>
        <position position="52"/>
    </location>
    <ligand>
        <name>S-adenosyl-L-methionine</name>
        <dbReference type="ChEBI" id="CHEBI:59789"/>
    </ligand>
</feature>
<feature type="binding site" evidence="1">
    <location>
        <position position="73"/>
    </location>
    <ligand>
        <name>S-adenosyl-L-methionine</name>
        <dbReference type="ChEBI" id="CHEBI:59789"/>
    </ligand>
</feature>
<feature type="binding site" evidence="1">
    <location>
        <position position="97"/>
    </location>
    <ligand>
        <name>S-adenosyl-L-methionine</name>
        <dbReference type="ChEBI" id="CHEBI:59789"/>
    </ligand>
</feature>
<feature type="binding site" evidence="1">
    <location>
        <position position="117"/>
    </location>
    <ligand>
        <name>S-adenosyl-L-methionine</name>
        <dbReference type="ChEBI" id="CHEBI:59789"/>
    </ligand>
</feature>
<evidence type="ECO:0000255" key="1">
    <source>
        <dbReference type="HAMAP-Rule" id="MF_00607"/>
    </source>
</evidence>
<keyword id="KW-0963">Cytoplasm</keyword>
<keyword id="KW-0489">Methyltransferase</keyword>
<keyword id="KW-1185">Reference proteome</keyword>
<keyword id="KW-0694">RNA-binding</keyword>
<keyword id="KW-0698">rRNA processing</keyword>
<keyword id="KW-0949">S-adenosyl-L-methionine</keyword>
<keyword id="KW-0808">Transferase</keyword>
<accession>Q251W8</accession>
<organism>
    <name type="scientific">Desulfitobacterium hafniense (strain Y51)</name>
    <dbReference type="NCBI Taxonomy" id="138119"/>
    <lineage>
        <taxon>Bacteria</taxon>
        <taxon>Bacillati</taxon>
        <taxon>Bacillota</taxon>
        <taxon>Clostridia</taxon>
        <taxon>Eubacteriales</taxon>
        <taxon>Desulfitobacteriaceae</taxon>
        <taxon>Desulfitobacterium</taxon>
    </lineage>
</organism>
<name>RSMA_DESHY</name>
<comment type="function">
    <text evidence="1">Specifically dimethylates two adjacent adenosines (A1518 and A1519) in the loop of a conserved hairpin near the 3'-end of 16S rRNA in the 30S particle. May play a critical role in biogenesis of 30S subunits.</text>
</comment>
<comment type="catalytic activity">
    <reaction evidence="1">
        <text>adenosine(1518)/adenosine(1519) in 16S rRNA + 4 S-adenosyl-L-methionine = N(6)-dimethyladenosine(1518)/N(6)-dimethyladenosine(1519) in 16S rRNA + 4 S-adenosyl-L-homocysteine + 4 H(+)</text>
        <dbReference type="Rhea" id="RHEA:19609"/>
        <dbReference type="Rhea" id="RHEA-COMP:10232"/>
        <dbReference type="Rhea" id="RHEA-COMP:10233"/>
        <dbReference type="ChEBI" id="CHEBI:15378"/>
        <dbReference type="ChEBI" id="CHEBI:57856"/>
        <dbReference type="ChEBI" id="CHEBI:59789"/>
        <dbReference type="ChEBI" id="CHEBI:74411"/>
        <dbReference type="ChEBI" id="CHEBI:74493"/>
        <dbReference type="EC" id="2.1.1.182"/>
    </reaction>
</comment>
<comment type="subcellular location">
    <subcellularLocation>
        <location evidence="1">Cytoplasm</location>
    </subcellularLocation>
</comment>
<comment type="similarity">
    <text evidence="1">Belongs to the class I-like SAM-binding methyltransferase superfamily. rRNA adenine N(6)-methyltransferase family. RsmA subfamily.</text>
</comment>
<proteinExistence type="inferred from homology"/>
<gene>
    <name evidence="1" type="primary">rsmA</name>
    <name evidence="1" type="synonym">ksgA</name>
    <name type="ordered locus">DSY0135</name>
</gene>
<sequence>MENAANYTRRILKGGAKAHKSLGQNFLMDDRVIEAIAAASIKDPEIPVVEIGPGLGVLTRVLAQKAQKVWAVELDRGKVNLLQRELQGLPVDILNMDALKLDLKDIWGTGKGVLVGNLPYYITSPLLMHFLEQKDSLASMVVMVQKEVADRLVAKPGGKDYGILSIAAQVSAQGEKLFEVPPQAFWPAPKVTSAVVRFELRSYPGFRVKEKDFFRVVKAAFSQRRKTLGNSLAGGLGLPKQQIGEILAAAGVDEQRRAETLSIDEFQAVTEAVMKNLD</sequence>
<reference key="1">
    <citation type="journal article" date="2006" name="J. Bacteriol.">
        <title>Complete genome sequence of the dehalorespiring bacterium Desulfitobacterium hafniense Y51 and comparison with Dehalococcoides ethenogenes 195.</title>
        <authorList>
            <person name="Nonaka H."/>
            <person name="Keresztes G."/>
            <person name="Shinoda Y."/>
            <person name="Ikenaga Y."/>
            <person name="Abe M."/>
            <person name="Naito K."/>
            <person name="Inatomi K."/>
            <person name="Furukawa K."/>
            <person name="Inui M."/>
            <person name="Yukawa H."/>
        </authorList>
    </citation>
    <scope>NUCLEOTIDE SEQUENCE [LARGE SCALE GENOMIC DNA]</scope>
    <source>
        <strain>Y51</strain>
    </source>
</reference>
<dbReference type="EC" id="2.1.1.182" evidence="1"/>
<dbReference type="EMBL" id="AP008230">
    <property type="protein sequence ID" value="BAE81924.1"/>
    <property type="molecule type" value="Genomic_DNA"/>
</dbReference>
<dbReference type="RefSeq" id="WP_005814989.1">
    <property type="nucleotide sequence ID" value="NC_007907.1"/>
</dbReference>
<dbReference type="SMR" id="Q251W8"/>
<dbReference type="STRING" id="138119.DSY0135"/>
<dbReference type="KEGG" id="dsy:DSY0135"/>
<dbReference type="eggNOG" id="COG0030">
    <property type="taxonomic scope" value="Bacteria"/>
</dbReference>
<dbReference type="HOGENOM" id="CLU_041220_0_1_9"/>
<dbReference type="Proteomes" id="UP000001946">
    <property type="component" value="Chromosome"/>
</dbReference>
<dbReference type="GO" id="GO:0005829">
    <property type="term" value="C:cytosol"/>
    <property type="evidence" value="ECO:0007669"/>
    <property type="project" value="TreeGrafter"/>
</dbReference>
<dbReference type="GO" id="GO:0052908">
    <property type="term" value="F:16S rRNA (adenine(1518)-N(6)/adenine(1519)-N(6))-dimethyltransferase activity"/>
    <property type="evidence" value="ECO:0007669"/>
    <property type="project" value="UniProtKB-EC"/>
</dbReference>
<dbReference type="GO" id="GO:0003723">
    <property type="term" value="F:RNA binding"/>
    <property type="evidence" value="ECO:0007669"/>
    <property type="project" value="UniProtKB-KW"/>
</dbReference>
<dbReference type="CDD" id="cd02440">
    <property type="entry name" value="AdoMet_MTases"/>
    <property type="match status" value="1"/>
</dbReference>
<dbReference type="Gene3D" id="1.10.8.100">
    <property type="entry name" value="Ribosomal RNA adenine dimethylase-like, domain 2"/>
    <property type="match status" value="1"/>
</dbReference>
<dbReference type="Gene3D" id="3.40.50.150">
    <property type="entry name" value="Vaccinia Virus protein VP39"/>
    <property type="match status" value="1"/>
</dbReference>
<dbReference type="HAMAP" id="MF_00607">
    <property type="entry name" value="16SrRNA_methyltr_A"/>
    <property type="match status" value="1"/>
</dbReference>
<dbReference type="InterPro" id="IPR001737">
    <property type="entry name" value="KsgA/Erm"/>
</dbReference>
<dbReference type="InterPro" id="IPR023165">
    <property type="entry name" value="rRNA_Ade_diMease-like_C"/>
</dbReference>
<dbReference type="InterPro" id="IPR020596">
    <property type="entry name" value="rRNA_Ade_Mease_Trfase_CS"/>
</dbReference>
<dbReference type="InterPro" id="IPR020598">
    <property type="entry name" value="rRNA_Ade_methylase_Trfase_N"/>
</dbReference>
<dbReference type="InterPro" id="IPR011530">
    <property type="entry name" value="rRNA_adenine_dimethylase"/>
</dbReference>
<dbReference type="InterPro" id="IPR029063">
    <property type="entry name" value="SAM-dependent_MTases_sf"/>
</dbReference>
<dbReference type="NCBIfam" id="TIGR00755">
    <property type="entry name" value="ksgA"/>
    <property type="match status" value="1"/>
</dbReference>
<dbReference type="PANTHER" id="PTHR11727">
    <property type="entry name" value="DIMETHYLADENOSINE TRANSFERASE"/>
    <property type="match status" value="1"/>
</dbReference>
<dbReference type="PANTHER" id="PTHR11727:SF7">
    <property type="entry name" value="DIMETHYLADENOSINE TRANSFERASE-RELATED"/>
    <property type="match status" value="1"/>
</dbReference>
<dbReference type="Pfam" id="PF00398">
    <property type="entry name" value="RrnaAD"/>
    <property type="match status" value="1"/>
</dbReference>
<dbReference type="SMART" id="SM00650">
    <property type="entry name" value="rADc"/>
    <property type="match status" value="1"/>
</dbReference>
<dbReference type="SUPFAM" id="SSF53335">
    <property type="entry name" value="S-adenosyl-L-methionine-dependent methyltransferases"/>
    <property type="match status" value="1"/>
</dbReference>
<dbReference type="PROSITE" id="PS01131">
    <property type="entry name" value="RRNA_A_DIMETH"/>
    <property type="match status" value="1"/>
</dbReference>
<dbReference type="PROSITE" id="PS51689">
    <property type="entry name" value="SAM_RNA_A_N6_MT"/>
    <property type="match status" value="1"/>
</dbReference>